<name>PPSB_BACSU</name>
<protein>
    <recommendedName>
        <fullName>Plipastatin synthase subunit B</fullName>
        <ecNumber>2.3.1.-</ecNumber>
    </recommendedName>
    <alternativeName>
        <fullName>Peptide synthase 2</fullName>
    </alternativeName>
    <domain>
        <recommendedName>
            <fullName>ATP-dependent tyrosine adenylase 1</fullName>
            <shortName>TyrA 1</shortName>
        </recommendedName>
        <alternativeName>
            <fullName>Tyrosine activase 1</fullName>
        </alternativeName>
    </domain>
    <domain>
        <recommendedName>
            <fullName>ATP-dependent threonine adenylase</fullName>
            <shortName>ThrA</shortName>
        </recommendedName>
        <alternativeName>
            <fullName>Threonine activase</fullName>
        </alternativeName>
    </domain>
</protein>
<reference key="1">
    <citation type="journal article" date="1995" name="Microbiology">
        <title>A putative new peptide synthase operon in Bacillus subtilis: partial characterization.</title>
        <authorList>
            <person name="Tognoni A."/>
            <person name="Franchi E."/>
            <person name="Magistrelli C."/>
            <person name="Colombo E."/>
            <person name="Cosmina P."/>
            <person name="Grandi G."/>
        </authorList>
    </citation>
    <scope>NUCLEOTIDE SEQUENCE [GENOMIC DNA]</scope>
    <source>
        <strain>168</strain>
    </source>
</reference>
<reference key="2">
    <citation type="journal article" date="1997" name="Nature">
        <title>The complete genome sequence of the Gram-positive bacterium Bacillus subtilis.</title>
        <authorList>
            <person name="Kunst F."/>
            <person name="Ogasawara N."/>
            <person name="Moszer I."/>
            <person name="Albertini A.M."/>
            <person name="Alloni G."/>
            <person name="Azevedo V."/>
            <person name="Bertero M.G."/>
            <person name="Bessieres P."/>
            <person name="Bolotin A."/>
            <person name="Borchert S."/>
            <person name="Borriss R."/>
            <person name="Boursier L."/>
            <person name="Brans A."/>
            <person name="Braun M."/>
            <person name="Brignell S.C."/>
            <person name="Bron S."/>
            <person name="Brouillet S."/>
            <person name="Bruschi C.V."/>
            <person name="Caldwell B."/>
            <person name="Capuano V."/>
            <person name="Carter N.M."/>
            <person name="Choi S.-K."/>
            <person name="Codani J.-J."/>
            <person name="Connerton I.F."/>
            <person name="Cummings N.J."/>
            <person name="Daniel R.A."/>
            <person name="Denizot F."/>
            <person name="Devine K.M."/>
            <person name="Duesterhoeft A."/>
            <person name="Ehrlich S.D."/>
            <person name="Emmerson P.T."/>
            <person name="Entian K.-D."/>
            <person name="Errington J."/>
            <person name="Fabret C."/>
            <person name="Ferrari E."/>
            <person name="Foulger D."/>
            <person name="Fritz C."/>
            <person name="Fujita M."/>
            <person name="Fujita Y."/>
            <person name="Fuma S."/>
            <person name="Galizzi A."/>
            <person name="Galleron N."/>
            <person name="Ghim S.-Y."/>
            <person name="Glaser P."/>
            <person name="Goffeau A."/>
            <person name="Golightly E.J."/>
            <person name="Grandi G."/>
            <person name="Guiseppi G."/>
            <person name="Guy B.J."/>
            <person name="Haga K."/>
            <person name="Haiech J."/>
            <person name="Harwood C.R."/>
            <person name="Henaut A."/>
            <person name="Hilbert H."/>
            <person name="Holsappel S."/>
            <person name="Hosono S."/>
            <person name="Hullo M.-F."/>
            <person name="Itaya M."/>
            <person name="Jones L.-M."/>
            <person name="Joris B."/>
            <person name="Karamata D."/>
            <person name="Kasahara Y."/>
            <person name="Klaerr-Blanchard M."/>
            <person name="Klein C."/>
            <person name="Kobayashi Y."/>
            <person name="Koetter P."/>
            <person name="Koningstein G."/>
            <person name="Krogh S."/>
            <person name="Kumano M."/>
            <person name="Kurita K."/>
            <person name="Lapidus A."/>
            <person name="Lardinois S."/>
            <person name="Lauber J."/>
            <person name="Lazarevic V."/>
            <person name="Lee S.-M."/>
            <person name="Levine A."/>
            <person name="Liu H."/>
            <person name="Masuda S."/>
            <person name="Mauel C."/>
            <person name="Medigue C."/>
            <person name="Medina N."/>
            <person name="Mellado R.P."/>
            <person name="Mizuno M."/>
            <person name="Moestl D."/>
            <person name="Nakai S."/>
            <person name="Noback M."/>
            <person name="Noone D."/>
            <person name="O'Reilly M."/>
            <person name="Ogawa K."/>
            <person name="Ogiwara A."/>
            <person name="Oudega B."/>
            <person name="Park S.-H."/>
            <person name="Parro V."/>
            <person name="Pohl T.M."/>
            <person name="Portetelle D."/>
            <person name="Porwollik S."/>
            <person name="Prescott A.M."/>
            <person name="Presecan E."/>
            <person name="Pujic P."/>
            <person name="Purnelle B."/>
            <person name="Rapoport G."/>
            <person name="Rey M."/>
            <person name="Reynolds S."/>
            <person name="Rieger M."/>
            <person name="Rivolta C."/>
            <person name="Rocha E."/>
            <person name="Roche B."/>
            <person name="Rose M."/>
            <person name="Sadaie Y."/>
            <person name="Sato T."/>
            <person name="Scanlan E."/>
            <person name="Schleich S."/>
            <person name="Schroeter R."/>
            <person name="Scoffone F."/>
            <person name="Sekiguchi J."/>
            <person name="Sekowska A."/>
            <person name="Seror S.J."/>
            <person name="Serror P."/>
            <person name="Shin B.-S."/>
            <person name="Soldo B."/>
            <person name="Sorokin A."/>
            <person name="Tacconi E."/>
            <person name="Takagi T."/>
            <person name="Takahashi H."/>
            <person name="Takemaru K."/>
            <person name="Takeuchi M."/>
            <person name="Tamakoshi A."/>
            <person name="Tanaka T."/>
            <person name="Terpstra P."/>
            <person name="Tognoni A."/>
            <person name="Tosato V."/>
            <person name="Uchiyama S."/>
            <person name="Vandenbol M."/>
            <person name="Vannier F."/>
            <person name="Vassarotti A."/>
            <person name="Viari A."/>
            <person name="Wambutt R."/>
            <person name="Wedler E."/>
            <person name="Wedler H."/>
            <person name="Weitzenegger T."/>
            <person name="Winters P."/>
            <person name="Wipat A."/>
            <person name="Yamamoto H."/>
            <person name="Yamane K."/>
            <person name="Yasumoto K."/>
            <person name="Yata K."/>
            <person name="Yoshida K."/>
            <person name="Yoshikawa H.-F."/>
            <person name="Zumstein E."/>
            <person name="Yoshikawa H."/>
            <person name="Danchin A."/>
        </authorList>
    </citation>
    <scope>NUCLEOTIDE SEQUENCE [LARGE SCALE GENOMIC DNA]</scope>
    <source>
        <strain>168</strain>
    </source>
</reference>
<reference key="3">
    <citation type="journal article" date="1999" name="Antimicrob. Agents Chemother.">
        <title>The genes degQ, pps, and lpa-8 (sfp) are responsible for conversion of Bacillus subtilis 168 to plipastatin production.</title>
        <authorList>
            <person name="Tsuge K."/>
            <person name="Ano T."/>
            <person name="Hirai M."/>
            <person name="Nakamura Y."/>
            <person name="Shoda M."/>
        </authorList>
    </citation>
    <scope>FUNCTION IN PLIPASTATIN BIOSYNTHESIS</scope>
</reference>
<accession>P39846</accession>
<dbReference type="EC" id="2.3.1.-"/>
<dbReference type="EMBL" id="Z34883">
    <property type="protein sequence ID" value="CAA84361.1"/>
    <property type="molecule type" value="Genomic_DNA"/>
</dbReference>
<dbReference type="EMBL" id="AL009126">
    <property type="protein sequence ID" value="CAB13716.1"/>
    <property type="molecule type" value="Genomic_DNA"/>
</dbReference>
<dbReference type="PIR" id="I40457">
    <property type="entry name" value="I40457"/>
</dbReference>
<dbReference type="RefSeq" id="NP_389715.1">
    <property type="nucleotide sequence ID" value="NC_000964.3"/>
</dbReference>
<dbReference type="RefSeq" id="WP_003247155.1">
    <property type="nucleotide sequence ID" value="NZ_OZ025638.1"/>
</dbReference>
<dbReference type="SMR" id="P39846"/>
<dbReference type="FunCoup" id="P39846">
    <property type="interactions" value="26"/>
</dbReference>
<dbReference type="STRING" id="224308.BSU18330"/>
<dbReference type="PaxDb" id="224308-BSU18330"/>
<dbReference type="EnsemblBacteria" id="CAB13716">
    <property type="protein sequence ID" value="CAB13716"/>
    <property type="gene ID" value="BSU_18330"/>
</dbReference>
<dbReference type="GeneID" id="939993"/>
<dbReference type="KEGG" id="bsu:BSU18330"/>
<dbReference type="PATRIC" id="fig|224308.179.peg.2000"/>
<dbReference type="eggNOG" id="COG1020">
    <property type="taxonomic scope" value="Bacteria"/>
</dbReference>
<dbReference type="InParanoid" id="P39846"/>
<dbReference type="OrthoDB" id="9765680at2"/>
<dbReference type="PhylomeDB" id="P39846"/>
<dbReference type="BioCyc" id="BSUB:BSU18330-MONOMER"/>
<dbReference type="Proteomes" id="UP000001570">
    <property type="component" value="Chromosome"/>
</dbReference>
<dbReference type="GO" id="GO:0005737">
    <property type="term" value="C:cytoplasm"/>
    <property type="evidence" value="ECO:0000318"/>
    <property type="project" value="GO_Central"/>
</dbReference>
<dbReference type="GO" id="GO:0005829">
    <property type="term" value="C:cytosol"/>
    <property type="evidence" value="ECO:0000318"/>
    <property type="project" value="GO_Central"/>
</dbReference>
<dbReference type="GO" id="GO:0016874">
    <property type="term" value="F:ligase activity"/>
    <property type="evidence" value="ECO:0007669"/>
    <property type="project" value="UniProtKB-KW"/>
</dbReference>
<dbReference type="GO" id="GO:0031177">
    <property type="term" value="F:phosphopantetheine binding"/>
    <property type="evidence" value="ECO:0000318"/>
    <property type="project" value="GO_Central"/>
</dbReference>
<dbReference type="GO" id="GO:0016740">
    <property type="term" value="F:transferase activity"/>
    <property type="evidence" value="ECO:0007669"/>
    <property type="project" value="UniProtKB-KW"/>
</dbReference>
<dbReference type="GO" id="GO:0043041">
    <property type="term" value="P:amino acid activation for nonribosomal peptide biosynthetic process"/>
    <property type="evidence" value="ECO:0000318"/>
    <property type="project" value="GO_Central"/>
</dbReference>
<dbReference type="GO" id="GO:0017000">
    <property type="term" value="P:antibiotic biosynthetic process"/>
    <property type="evidence" value="ECO:0007669"/>
    <property type="project" value="UniProtKB-KW"/>
</dbReference>
<dbReference type="GO" id="GO:0008610">
    <property type="term" value="P:lipid biosynthetic process"/>
    <property type="evidence" value="ECO:0007669"/>
    <property type="project" value="UniProtKB-ARBA"/>
</dbReference>
<dbReference type="GO" id="GO:0044550">
    <property type="term" value="P:secondary metabolite biosynthetic process"/>
    <property type="evidence" value="ECO:0000318"/>
    <property type="project" value="GO_Central"/>
</dbReference>
<dbReference type="CDD" id="cd05930">
    <property type="entry name" value="A_NRPS"/>
    <property type="match status" value="1"/>
</dbReference>
<dbReference type="CDD" id="cd17643">
    <property type="entry name" value="A_NRPS_Cytc1-like"/>
    <property type="match status" value="1"/>
</dbReference>
<dbReference type="CDD" id="cd19543">
    <property type="entry name" value="DCL_NRPS"/>
    <property type="match status" value="1"/>
</dbReference>
<dbReference type="CDD" id="cd19534">
    <property type="entry name" value="E_NRPS"/>
    <property type="match status" value="1"/>
</dbReference>
<dbReference type="CDD" id="cd19531">
    <property type="entry name" value="LCL_NRPS-like"/>
    <property type="match status" value="1"/>
</dbReference>
<dbReference type="FunFam" id="3.30.300.30:FF:000010">
    <property type="entry name" value="Enterobactin synthetase component F"/>
    <property type="match status" value="2"/>
</dbReference>
<dbReference type="FunFam" id="3.40.50.980:FF:000002">
    <property type="entry name" value="Enterobactin synthetase component F"/>
    <property type="match status" value="1"/>
</dbReference>
<dbReference type="FunFam" id="3.30.559.10:FF:000012">
    <property type="entry name" value="Non-ribosomal peptide synthetase"/>
    <property type="match status" value="1"/>
</dbReference>
<dbReference type="FunFam" id="3.40.50.12780:FF:000012">
    <property type="entry name" value="Non-ribosomal peptide synthetase"/>
    <property type="match status" value="2"/>
</dbReference>
<dbReference type="FunFam" id="3.40.50.980:FF:000001">
    <property type="entry name" value="Non-ribosomal peptide synthetase"/>
    <property type="match status" value="2"/>
</dbReference>
<dbReference type="FunFam" id="2.30.38.10:FF:000001">
    <property type="entry name" value="Non-ribosomal peptide synthetase PvdI"/>
    <property type="match status" value="1"/>
</dbReference>
<dbReference type="FunFam" id="3.30.559.10:FF:000016">
    <property type="entry name" value="Nonribosomal peptide synthase Pes1"/>
    <property type="match status" value="1"/>
</dbReference>
<dbReference type="FunFam" id="1.10.1200.10:FF:000005">
    <property type="entry name" value="Nonribosomal peptide synthetase 1"/>
    <property type="match status" value="2"/>
</dbReference>
<dbReference type="Gene3D" id="3.30.300.30">
    <property type="match status" value="2"/>
</dbReference>
<dbReference type="Gene3D" id="3.40.50.980">
    <property type="match status" value="4"/>
</dbReference>
<dbReference type="Gene3D" id="1.10.1200.10">
    <property type="entry name" value="ACP-like"/>
    <property type="match status" value="2"/>
</dbReference>
<dbReference type="Gene3D" id="3.30.559.10">
    <property type="entry name" value="Chloramphenicol acetyltransferase-like domain"/>
    <property type="match status" value="3"/>
</dbReference>
<dbReference type="Gene3D" id="2.30.38.10">
    <property type="entry name" value="Luciferase, Domain 3"/>
    <property type="match status" value="2"/>
</dbReference>
<dbReference type="Gene3D" id="3.30.559.30">
    <property type="entry name" value="Nonribosomal peptide synthetase, condensation domain"/>
    <property type="match status" value="3"/>
</dbReference>
<dbReference type="InterPro" id="IPR010071">
    <property type="entry name" value="AA_adenyl_dom"/>
</dbReference>
<dbReference type="InterPro" id="IPR036736">
    <property type="entry name" value="ACP-like_sf"/>
</dbReference>
<dbReference type="InterPro" id="IPR025110">
    <property type="entry name" value="AMP-bd_C"/>
</dbReference>
<dbReference type="InterPro" id="IPR045851">
    <property type="entry name" value="AMP-bd_C_sf"/>
</dbReference>
<dbReference type="InterPro" id="IPR020845">
    <property type="entry name" value="AMP-binding_CS"/>
</dbReference>
<dbReference type="InterPro" id="IPR000873">
    <property type="entry name" value="AMP-dep_synth/lig_dom"/>
</dbReference>
<dbReference type="InterPro" id="IPR023213">
    <property type="entry name" value="CAT-like_dom_sf"/>
</dbReference>
<dbReference type="InterPro" id="IPR001242">
    <property type="entry name" value="Condensatn"/>
</dbReference>
<dbReference type="InterPro" id="IPR010060">
    <property type="entry name" value="NRPS_synth"/>
</dbReference>
<dbReference type="InterPro" id="IPR020806">
    <property type="entry name" value="PKS_PP-bd"/>
</dbReference>
<dbReference type="InterPro" id="IPR009081">
    <property type="entry name" value="PP-bd_ACP"/>
</dbReference>
<dbReference type="InterPro" id="IPR006162">
    <property type="entry name" value="Ppantetheine_attach_site"/>
</dbReference>
<dbReference type="NCBIfam" id="TIGR01733">
    <property type="entry name" value="AA-adenyl-dom"/>
    <property type="match status" value="2"/>
</dbReference>
<dbReference type="NCBIfam" id="TIGR01720">
    <property type="entry name" value="NRPS-para261"/>
    <property type="match status" value="1"/>
</dbReference>
<dbReference type="NCBIfam" id="NF003417">
    <property type="entry name" value="PRK04813.1"/>
    <property type="match status" value="2"/>
</dbReference>
<dbReference type="PANTHER" id="PTHR45527">
    <property type="entry name" value="NONRIBOSOMAL PEPTIDE SYNTHETASE"/>
    <property type="match status" value="1"/>
</dbReference>
<dbReference type="PANTHER" id="PTHR45527:SF14">
    <property type="entry name" value="PLIPASTATIN SYNTHASE SUBUNIT B"/>
    <property type="match status" value="1"/>
</dbReference>
<dbReference type="Pfam" id="PF00501">
    <property type="entry name" value="AMP-binding"/>
    <property type="match status" value="2"/>
</dbReference>
<dbReference type="Pfam" id="PF13193">
    <property type="entry name" value="AMP-binding_C"/>
    <property type="match status" value="2"/>
</dbReference>
<dbReference type="Pfam" id="PF00668">
    <property type="entry name" value="Condensation"/>
    <property type="match status" value="3"/>
</dbReference>
<dbReference type="Pfam" id="PF00550">
    <property type="entry name" value="PP-binding"/>
    <property type="match status" value="2"/>
</dbReference>
<dbReference type="SMART" id="SM00823">
    <property type="entry name" value="PKS_PP"/>
    <property type="match status" value="2"/>
</dbReference>
<dbReference type="SUPFAM" id="SSF56801">
    <property type="entry name" value="Acetyl-CoA synthetase-like"/>
    <property type="match status" value="2"/>
</dbReference>
<dbReference type="SUPFAM" id="SSF47336">
    <property type="entry name" value="ACP-like"/>
    <property type="match status" value="2"/>
</dbReference>
<dbReference type="SUPFAM" id="SSF52777">
    <property type="entry name" value="CoA-dependent acyltransferases"/>
    <property type="match status" value="6"/>
</dbReference>
<dbReference type="PROSITE" id="PS00455">
    <property type="entry name" value="AMP_BINDING"/>
    <property type="match status" value="2"/>
</dbReference>
<dbReference type="PROSITE" id="PS50075">
    <property type="entry name" value="CARRIER"/>
    <property type="match status" value="2"/>
</dbReference>
<dbReference type="PROSITE" id="PS00012">
    <property type="entry name" value="PHOSPHOPANTETHEINE"/>
    <property type="match status" value="1"/>
</dbReference>
<comment type="function">
    <text evidence="2">This protein is a multifunctional enzyme, able to activate and polymerize the amino acids Tyr and Thr as part of the biosynthesis of the lipopeptide antibiotic plipastatin. The Thr residue is further converted to the D-allo-isomer form. The activation sites for these amino acids consist of individual domains.</text>
</comment>
<comment type="cofactor">
    <cofactor evidence="3">
        <name>pantetheine 4'-phosphate</name>
        <dbReference type="ChEBI" id="CHEBI:47942"/>
    </cofactor>
    <text evidence="3">Binds 2 phosphopantetheines covalently.</text>
</comment>
<comment type="similarity">
    <text evidence="3">Belongs to the ATP-dependent AMP-binding enzyme family.</text>
</comment>
<proteinExistence type="evidence at protein level"/>
<sequence length="2560" mass="290165">MAQSAQIQDIYPLSHMQEGMLFHSLMDFSSKAYIEQTSFTITGNLCVDSFQKSLNLLVSRYDIFRTIFIKEVPDLTGPQQVVLSNRELTVYREDISRLADQEQQTLIDAFMTKDREKGFDLQKDPLMRLALFDRGDSQYTCVWTHHHIIMDGWCLGIILKEFFSMYDSLKNNSPVQLGSTVPYSRYIEWLGEQDQEETAAYWSEYLKEYGNTASIPRIKRRTADGNYKADQVSFSLAPDMVEKLTEAAQNWGVTLNTLFMSIWGVLLHRYNAADDAVFGSVISGRPSAIDGIESMVGLFINTVPVRIRSAEGITFSSLVKAVQEDILSSEQHGYYPLYEIQNHSPLKQGLIDHIFVFENYPVQLHQALSVESENDEGALKLSDISMSEQTNYDFNIVIVPGESFYIKFSYNADVYEREEMLRIQGHLKQALDCILTNPDVAVSDINIVPPEEQQVIQLFNETERPYVNKTIPQLFEEQAHKTPEAAALKMGNECWTYRQLQVRANQIAHALIEKGVGSGDIVAVMMGRSMEMPAALLGIWKAGGAYMPLDPHFPAERLSFLLKDSQAAQLLIEEDLISLIPPSYEGNTITIEHTESYQTEAPNMPPGDLAYLIYTSGTTGRPKGVLVDHHGIANTLQWRREEYSMTEQDISLHLFSYVFDGCVTSLFTPLLSGACVLLTTDDEAKDVLALKRKIARYKVSHMIIVPSLYRVLLEVMTADDAKSLRIVTFAGEAVTPDLLELNQIICPSAELANEYGPTENSVATTILRHLNKKERITIGHPIRNTKVFVLHGNQMQPIGAAGELCISGAGLARGYYKQQELTQKAFSDHPFLEGERLYRTGDAGRFLPDGTIEYIGRFDDQVKIRGYRIELREIETVLRQAPGVKEAAVLARDVSAEEKELVAYIVPEKGNSLPDLYQHLAGTLPSYMIPASIINISQMPLTSSGKLDRFALPEPENNTSVTYMAPRTLIEADLAHIWEDVLNKQHIGIRDDFFQLGGQSLKAAALVSRIHKKLNVELPLSEVFSYPTVESMAVKLMSLKEHAFTQIEPADQRDVYPLSFSQKRLYALHQLADDSTGYNMPAVLELRGNLNRQRLRSVLTELVNRHEALRTVFVLDRDEPVQIIYPEMAFDLKELEMESEQMLESAIETFIKPFYLSSGPLFRACVITMGNNRGFLLLDMHHIIADGVSMSTLVQEFTDLYCGKELPALNLHYKDFAVWQQEKHPKELYKKQEAYWLGQLGGSLPTLELPLDKTRPRLPDFRGGTIEVNIDKDMADELHRLMAETGTTLYMILLAVYSILLSKLSGQEDIVVGSPAAGRPHADLERVIGMFVNTLAMRSKPEGHKTFSSYLHDIRHLALTAYEHQDYPFEELADKLDTNREVNRNPLFDAMLVLQSSEDFRFEVPGLSISSVTPKHDISKFDLTLHAEEHLSGIRCRFEYSTALFEEETITQWASYFIELVKGVTADTEMRISNMQLLPAAERRLLLEKMGQYAAYPRNENIVSLFEKQVAQYPEHIAVVCGHSQLTYRDLNEKAERAAAMLIKQGVRTGDIVGLMLDRSPDMIIGVLSILKAGGAYLPIDPEYPKERISFMLNDSGAKLLLTERGLNKPADYTGHILYIDECENNSIPADVNIEEIVTDQPAYVIYTSGTTGQPKGVIVEHRNVISLLKHQNLPFEFNHEDVWTLFHSYCFDFSVWEMFGALLNGSTLVVVSKETARDPQAFRLLLKKERVTVLNQTPTAFYGLMLEDQNHTDHLNIRYVIFGGEALQPGLLQSWNEKYPHTDLINMYGITETTVHVTFKKLSAADIAKNKSNIGRPLSTLQAHVMDAHMNLQPTGVPGELYIGGEGVARGYLNRDELTADRFVSNPYLPGDRLYRTGDLAKRLSNGELEYLGRIDEQVKVRGHRIELGEIQAALLQYPMIKEAAVITRADEQGQTAIYAYMVIKDQQAANISDIRTYLKNALPDFMLPARMIQIDSIPVTVNGKLDQKALPEPEKQAYTADDISPRNEIETVMAEIWEELLNVDELGVSANFFKLGGDSIKALQVCARLKQRGFETTVREMFEHQTLGELSARVRKDVRAIDQGPVEGEITWTPIQQWFFSQSLESHHFNQSVMIYRAERFDEAALRKVLKSLVTHHDALRIVCRHEDGRQVQINRGIDLSDEELYALELFDVKDSLTEARNTIEEAASRMQEHIRLETGPLLHAGLFRTENGDHLFLTIHHLVVDAVSWRILFEDFSTAYKQAVSGESIKLPQKTDSYLTYSQRIADYSISRQVQREAAYWDECENRHIQPIPKDNDAASNTFKDTEVIDFELSRHHTELLLTAAHKAYSTEMNDILLTALGLALQKWTGNNQFKISMEGHGRESYLEDIDISRTVGWFTSIYPVWLDMRDSDHKDKEERLGHLIKQTKDMLHRIPHKGAGYGVLKYISKRWGSQKNSPEISFNYLGQFDQDIQSNAFEVSDIKPGNEISPNWERPYALDISGAVSSGCLNMHIIYNRFQFEEKTIQTFSRHFKQTLENIIEHCTGKENQEWSASDFTDEDLTLDELSEIMGAVNKL</sequence>
<feature type="chain" id="PRO_0000193186" description="Plipastatin synthase subunit B">
    <location>
        <begin position="1"/>
        <end position="2560"/>
    </location>
</feature>
<feature type="domain" description="Carrier 1" evidence="1">
    <location>
        <begin position="965"/>
        <end position="1040"/>
    </location>
</feature>
<feature type="domain" description="Carrier 2" evidence="1">
    <location>
        <begin position="2006"/>
        <end position="2080"/>
    </location>
</feature>
<feature type="region of interest" description="Domain 1 (tyrosine-activating)">
    <location>
        <begin position="7"/>
        <end position="1042"/>
    </location>
</feature>
<feature type="region of interest" description="Condensation 1">
    <location>
        <begin position="7"/>
        <end position="310"/>
    </location>
</feature>
<feature type="region of interest" description="Adenylation 1">
    <location>
        <begin position="496"/>
        <end position="889"/>
    </location>
</feature>
<feature type="region of interest" description="Domain 2 (D-allo-threonine-activating)">
    <location>
        <begin position="1052"/>
        <end position="2553"/>
    </location>
</feature>
<feature type="region of interest" description="Condensation 2">
    <location>
        <begin position="1052"/>
        <end position="1342"/>
    </location>
</feature>
<feature type="region of interest" description="Adenylation 2">
    <location>
        <begin position="1527"/>
        <end position="1927"/>
    </location>
</feature>
<feature type="region of interest" description="Epimerization">
    <location>
        <begin position="2088"/>
        <end position="2553"/>
    </location>
</feature>
<feature type="modified residue" description="O-(pantetheine 4'-phosphoryl)serine" evidence="1">
    <location>
        <position position="1000"/>
    </location>
</feature>
<feature type="modified residue" description="O-(pantetheine 4'-phosphoryl)serine" evidence="1">
    <location>
        <position position="2041"/>
    </location>
</feature>
<organism>
    <name type="scientific">Bacillus subtilis (strain 168)</name>
    <dbReference type="NCBI Taxonomy" id="224308"/>
    <lineage>
        <taxon>Bacteria</taxon>
        <taxon>Bacillati</taxon>
        <taxon>Bacillota</taxon>
        <taxon>Bacilli</taxon>
        <taxon>Bacillales</taxon>
        <taxon>Bacillaceae</taxon>
        <taxon>Bacillus</taxon>
    </lineage>
</organism>
<gene>
    <name type="primary">ppsB</name>
    <name type="synonym">pps2</name>
    <name type="ordered locus">BSU18330</name>
</gene>
<keyword id="KW-0045">Antibiotic biosynthesis</keyword>
<keyword id="KW-0436">Ligase</keyword>
<keyword id="KW-0511">Multifunctional enzyme</keyword>
<keyword id="KW-0596">Phosphopantetheine</keyword>
<keyword id="KW-0597">Phosphoprotein</keyword>
<keyword id="KW-1185">Reference proteome</keyword>
<keyword id="KW-0677">Repeat</keyword>
<keyword id="KW-0808">Transferase</keyword>
<evidence type="ECO:0000255" key="1">
    <source>
        <dbReference type="PROSITE-ProRule" id="PRU00258"/>
    </source>
</evidence>
<evidence type="ECO:0000269" key="2">
    <source>
    </source>
</evidence>
<evidence type="ECO:0000305" key="3"/>